<comment type="function">
    <text evidence="1">Catalyzes the condensation of carbamoyl phosphate and aspartate to form carbamoyl aspartate and inorganic phosphate, the committed step in the de novo pyrimidine nucleotide biosynthesis pathway.</text>
</comment>
<comment type="catalytic activity">
    <reaction evidence="1">
        <text>carbamoyl phosphate + L-aspartate = N-carbamoyl-L-aspartate + phosphate + H(+)</text>
        <dbReference type="Rhea" id="RHEA:20013"/>
        <dbReference type="ChEBI" id="CHEBI:15378"/>
        <dbReference type="ChEBI" id="CHEBI:29991"/>
        <dbReference type="ChEBI" id="CHEBI:32814"/>
        <dbReference type="ChEBI" id="CHEBI:43474"/>
        <dbReference type="ChEBI" id="CHEBI:58228"/>
        <dbReference type="EC" id="2.1.3.2"/>
    </reaction>
</comment>
<comment type="pathway">
    <text evidence="1">Pyrimidine metabolism; UMP biosynthesis via de novo pathway; (S)-dihydroorotate from bicarbonate: step 2/3.</text>
</comment>
<comment type="subunit">
    <text evidence="1">Heterododecamer (2C3:3R2) of six catalytic PyrB chains organized as two trimers (C3), and six regulatory PyrI chains organized as three dimers (R2).</text>
</comment>
<comment type="similarity">
    <text evidence="1">Belongs to the aspartate/ornithine carbamoyltransferase superfamily. ATCase family.</text>
</comment>
<gene>
    <name evidence="1" type="primary">pyrB</name>
    <name type="ordered locus">Amuc_0112</name>
</gene>
<feature type="chain" id="PRO_1000088733" description="Aspartate carbamoyltransferase catalytic subunit">
    <location>
        <begin position="1"/>
        <end position="309"/>
    </location>
</feature>
<feature type="binding site" evidence="1">
    <location>
        <position position="58"/>
    </location>
    <ligand>
        <name>carbamoyl phosphate</name>
        <dbReference type="ChEBI" id="CHEBI:58228"/>
    </ligand>
</feature>
<feature type="binding site" evidence="1">
    <location>
        <position position="59"/>
    </location>
    <ligand>
        <name>carbamoyl phosphate</name>
        <dbReference type="ChEBI" id="CHEBI:58228"/>
    </ligand>
</feature>
<feature type="binding site" evidence="1">
    <location>
        <position position="86"/>
    </location>
    <ligand>
        <name>L-aspartate</name>
        <dbReference type="ChEBI" id="CHEBI:29991"/>
    </ligand>
</feature>
<feature type="binding site" evidence="1">
    <location>
        <position position="108"/>
    </location>
    <ligand>
        <name>carbamoyl phosphate</name>
        <dbReference type="ChEBI" id="CHEBI:58228"/>
    </ligand>
</feature>
<feature type="binding site" evidence="1">
    <location>
        <position position="136"/>
    </location>
    <ligand>
        <name>carbamoyl phosphate</name>
        <dbReference type="ChEBI" id="CHEBI:58228"/>
    </ligand>
</feature>
<feature type="binding site" evidence="1">
    <location>
        <position position="139"/>
    </location>
    <ligand>
        <name>carbamoyl phosphate</name>
        <dbReference type="ChEBI" id="CHEBI:58228"/>
    </ligand>
</feature>
<feature type="binding site" evidence="1">
    <location>
        <position position="169"/>
    </location>
    <ligand>
        <name>L-aspartate</name>
        <dbReference type="ChEBI" id="CHEBI:29991"/>
    </ligand>
</feature>
<feature type="binding site" evidence="1">
    <location>
        <position position="223"/>
    </location>
    <ligand>
        <name>L-aspartate</name>
        <dbReference type="ChEBI" id="CHEBI:29991"/>
    </ligand>
</feature>
<feature type="binding site" evidence="1">
    <location>
        <position position="265"/>
    </location>
    <ligand>
        <name>carbamoyl phosphate</name>
        <dbReference type="ChEBI" id="CHEBI:58228"/>
    </ligand>
</feature>
<feature type="binding site" evidence="1">
    <location>
        <position position="266"/>
    </location>
    <ligand>
        <name>carbamoyl phosphate</name>
        <dbReference type="ChEBI" id="CHEBI:58228"/>
    </ligand>
</feature>
<proteinExistence type="inferred from homology"/>
<sequence>MNHPRKDLLNISSLTDEEIHTLLDSAGPMKELFTKSVKKVPALKGKSVLTLFYEPSTRTRSSFEVAAERLSADVTNFTVSTSSVVKGESVQDTIATLQAMKVDYVIVRHYNSGLPNVIARHTCASVVNAGDGAHAHPSQALLDSFTIREVFPDVRGKRVLIVGDILHSRVARSTSLLMKRLGMEVAFLGPGSLVPRTEHSGIPRFSDFNEAFAWKPDVIYLLRVQKERQDAPFFPSAREYNKIYGVTEERLKRISGEGLYIMHPGPVNRGVEICDLAMDYERCLINRQVENGIACRMSILYHLTPQTQH</sequence>
<keyword id="KW-0665">Pyrimidine biosynthesis</keyword>
<keyword id="KW-1185">Reference proteome</keyword>
<keyword id="KW-0808">Transferase</keyword>
<evidence type="ECO:0000255" key="1">
    <source>
        <dbReference type="HAMAP-Rule" id="MF_00001"/>
    </source>
</evidence>
<reference key="1">
    <citation type="journal article" date="2011" name="PLoS ONE">
        <title>The genome of Akkermansia muciniphila, a dedicated intestinal mucin degrader, and its use in exploring intestinal metagenomes.</title>
        <authorList>
            <person name="van Passel M.W."/>
            <person name="Kant R."/>
            <person name="Zoetendal E.G."/>
            <person name="Plugge C.M."/>
            <person name="Derrien M."/>
            <person name="Malfatti S.A."/>
            <person name="Chain P.S."/>
            <person name="Woyke T."/>
            <person name="Palva A."/>
            <person name="de Vos W.M."/>
            <person name="Smidt H."/>
        </authorList>
    </citation>
    <scope>NUCLEOTIDE SEQUENCE [LARGE SCALE GENOMIC DNA]</scope>
    <source>
        <strain>ATCC BAA-835 / DSM 22959 / JCM 33894 / BCRC 81048 / CCUG 64013 / CIP 107961 / Muc</strain>
    </source>
</reference>
<accession>B2ULR3</accession>
<name>PYRB_AKKM8</name>
<organism>
    <name type="scientific">Akkermansia muciniphila (strain ATCC BAA-835 / DSM 22959 / JCM 33894 / BCRC 81048 / CCUG 64013 / CIP 107961 / Muc)</name>
    <dbReference type="NCBI Taxonomy" id="349741"/>
    <lineage>
        <taxon>Bacteria</taxon>
        <taxon>Pseudomonadati</taxon>
        <taxon>Verrucomicrobiota</taxon>
        <taxon>Verrucomicrobiia</taxon>
        <taxon>Verrucomicrobiales</taxon>
        <taxon>Akkermansiaceae</taxon>
        <taxon>Akkermansia</taxon>
    </lineage>
</organism>
<dbReference type="EC" id="2.1.3.2" evidence="1"/>
<dbReference type="EMBL" id="CP001071">
    <property type="protein sequence ID" value="ACD03957.1"/>
    <property type="molecule type" value="Genomic_DNA"/>
</dbReference>
<dbReference type="RefSeq" id="WP_012419172.1">
    <property type="nucleotide sequence ID" value="NZ_CP071807.1"/>
</dbReference>
<dbReference type="SMR" id="B2ULR3"/>
<dbReference type="STRING" id="349741.Amuc_0112"/>
<dbReference type="PaxDb" id="349741-Amuc_0112"/>
<dbReference type="KEGG" id="amu:Amuc_0112"/>
<dbReference type="eggNOG" id="COG0540">
    <property type="taxonomic scope" value="Bacteria"/>
</dbReference>
<dbReference type="HOGENOM" id="CLU_043846_2_0_0"/>
<dbReference type="OrthoDB" id="9802587at2"/>
<dbReference type="BioCyc" id="AMUC349741:G1GBX-132-MONOMER"/>
<dbReference type="UniPathway" id="UPA00070">
    <property type="reaction ID" value="UER00116"/>
</dbReference>
<dbReference type="Proteomes" id="UP000001031">
    <property type="component" value="Chromosome"/>
</dbReference>
<dbReference type="GO" id="GO:0005829">
    <property type="term" value="C:cytosol"/>
    <property type="evidence" value="ECO:0007669"/>
    <property type="project" value="TreeGrafter"/>
</dbReference>
<dbReference type="GO" id="GO:0016597">
    <property type="term" value="F:amino acid binding"/>
    <property type="evidence" value="ECO:0007669"/>
    <property type="project" value="InterPro"/>
</dbReference>
<dbReference type="GO" id="GO:0004070">
    <property type="term" value="F:aspartate carbamoyltransferase activity"/>
    <property type="evidence" value="ECO:0007669"/>
    <property type="project" value="UniProtKB-UniRule"/>
</dbReference>
<dbReference type="GO" id="GO:0006207">
    <property type="term" value="P:'de novo' pyrimidine nucleobase biosynthetic process"/>
    <property type="evidence" value="ECO:0007669"/>
    <property type="project" value="InterPro"/>
</dbReference>
<dbReference type="GO" id="GO:0044205">
    <property type="term" value="P:'de novo' UMP biosynthetic process"/>
    <property type="evidence" value="ECO:0007669"/>
    <property type="project" value="UniProtKB-UniRule"/>
</dbReference>
<dbReference type="GO" id="GO:0006520">
    <property type="term" value="P:amino acid metabolic process"/>
    <property type="evidence" value="ECO:0007669"/>
    <property type="project" value="InterPro"/>
</dbReference>
<dbReference type="Gene3D" id="3.40.50.1370">
    <property type="entry name" value="Aspartate/ornithine carbamoyltransferase"/>
    <property type="match status" value="2"/>
</dbReference>
<dbReference type="HAMAP" id="MF_00001">
    <property type="entry name" value="Asp_carb_tr"/>
    <property type="match status" value="1"/>
</dbReference>
<dbReference type="InterPro" id="IPR006132">
    <property type="entry name" value="Asp/Orn_carbamoyltranf_P-bd"/>
</dbReference>
<dbReference type="InterPro" id="IPR006130">
    <property type="entry name" value="Asp/Orn_carbamoylTrfase"/>
</dbReference>
<dbReference type="InterPro" id="IPR036901">
    <property type="entry name" value="Asp/Orn_carbamoylTrfase_sf"/>
</dbReference>
<dbReference type="InterPro" id="IPR002082">
    <property type="entry name" value="Asp_carbamoyltransf"/>
</dbReference>
<dbReference type="InterPro" id="IPR006131">
    <property type="entry name" value="Asp_carbamoyltransf_Asp/Orn-bd"/>
</dbReference>
<dbReference type="NCBIfam" id="TIGR00670">
    <property type="entry name" value="asp_carb_tr"/>
    <property type="match status" value="1"/>
</dbReference>
<dbReference type="NCBIfam" id="NF002032">
    <property type="entry name" value="PRK00856.1"/>
    <property type="match status" value="1"/>
</dbReference>
<dbReference type="PANTHER" id="PTHR45753:SF6">
    <property type="entry name" value="ASPARTATE CARBAMOYLTRANSFERASE"/>
    <property type="match status" value="1"/>
</dbReference>
<dbReference type="PANTHER" id="PTHR45753">
    <property type="entry name" value="ORNITHINE CARBAMOYLTRANSFERASE, MITOCHONDRIAL"/>
    <property type="match status" value="1"/>
</dbReference>
<dbReference type="Pfam" id="PF00185">
    <property type="entry name" value="OTCace"/>
    <property type="match status" value="1"/>
</dbReference>
<dbReference type="Pfam" id="PF02729">
    <property type="entry name" value="OTCace_N"/>
    <property type="match status" value="1"/>
</dbReference>
<dbReference type="PRINTS" id="PR00100">
    <property type="entry name" value="AOTCASE"/>
</dbReference>
<dbReference type="PRINTS" id="PR00101">
    <property type="entry name" value="ATCASE"/>
</dbReference>
<dbReference type="SUPFAM" id="SSF53671">
    <property type="entry name" value="Aspartate/ornithine carbamoyltransferase"/>
    <property type="match status" value="1"/>
</dbReference>
<dbReference type="PROSITE" id="PS00097">
    <property type="entry name" value="CARBAMOYLTRANSFERASE"/>
    <property type="match status" value="1"/>
</dbReference>
<protein>
    <recommendedName>
        <fullName evidence="1">Aspartate carbamoyltransferase catalytic subunit</fullName>
        <ecNumber evidence="1">2.1.3.2</ecNumber>
    </recommendedName>
    <alternativeName>
        <fullName evidence="1">Aspartate transcarbamylase</fullName>
        <shortName evidence="1">ATCase</shortName>
    </alternativeName>
</protein>